<dbReference type="EC" id="3.1.3.9"/>
<dbReference type="EMBL" id="Z47787">
    <property type="protein sequence ID" value="CAA87708.1"/>
    <property type="molecule type" value="mRNA"/>
</dbReference>
<dbReference type="EMBL" id="AF118766">
    <property type="protein sequence ID" value="AAD28562.1"/>
    <property type="molecule type" value="Genomic_DNA"/>
</dbReference>
<dbReference type="EMBL" id="AF118762">
    <property type="protein sequence ID" value="AAD28562.1"/>
    <property type="status" value="JOINED"/>
    <property type="molecule type" value="Genomic_DNA"/>
</dbReference>
<dbReference type="EMBL" id="AF118763">
    <property type="protein sequence ID" value="AAD28562.1"/>
    <property type="status" value="JOINED"/>
    <property type="molecule type" value="Genomic_DNA"/>
</dbReference>
<dbReference type="EMBL" id="AF118764">
    <property type="protein sequence ID" value="AAD28562.1"/>
    <property type="status" value="JOINED"/>
    <property type="molecule type" value="Genomic_DNA"/>
</dbReference>
<dbReference type="EMBL" id="AF118765">
    <property type="protein sequence ID" value="AAD28562.1"/>
    <property type="status" value="JOINED"/>
    <property type="molecule type" value="Genomic_DNA"/>
</dbReference>
<dbReference type="EMBL" id="AK148465">
    <property type="protein sequence ID" value="BAE28569.1"/>
    <property type="molecule type" value="mRNA"/>
</dbReference>
<dbReference type="EMBL" id="AL929170">
    <property type="status" value="NOT_ANNOTATED_CDS"/>
    <property type="molecule type" value="Genomic_DNA"/>
</dbReference>
<dbReference type="EMBL" id="BC111905">
    <property type="protein sequence ID" value="AAI11906.1"/>
    <property type="status" value="ALT_SEQ"/>
    <property type="molecule type" value="mRNA"/>
</dbReference>
<dbReference type="CCDS" id="CCDS16089.1">
    <molecule id="Q9Z186-1"/>
</dbReference>
<dbReference type="CCDS" id="CCDS71066.1">
    <molecule id="Q9Z186-2"/>
</dbReference>
<dbReference type="RefSeq" id="NP_001276785.1">
    <property type="nucleotide sequence ID" value="NM_001289856.1"/>
</dbReference>
<dbReference type="RefSeq" id="NP_001276786.1">
    <molecule id="Q9Z186-2"/>
    <property type="nucleotide sequence ID" value="NM_001289857.1"/>
</dbReference>
<dbReference type="RefSeq" id="NP_067306.1">
    <molecule id="Q9Z186-1"/>
    <property type="nucleotide sequence ID" value="NM_021331.4"/>
</dbReference>
<dbReference type="BioGRID" id="199788">
    <property type="interactions" value="1"/>
</dbReference>
<dbReference type="FunCoup" id="Q9Z186">
    <property type="interactions" value="746"/>
</dbReference>
<dbReference type="STRING" id="10090.ENSMUSP00000005364"/>
<dbReference type="GlyCosmos" id="Q9Z186">
    <property type="glycosylation" value="1 site, No reported glycans"/>
</dbReference>
<dbReference type="GlyGen" id="Q9Z186">
    <property type="glycosylation" value="1 site"/>
</dbReference>
<dbReference type="PhosphoSitePlus" id="Q9Z186"/>
<dbReference type="PaxDb" id="10090-ENSMUSP00000005364"/>
<dbReference type="ProteomicsDB" id="271626">
    <molecule id="Q9Z186-1"/>
</dbReference>
<dbReference type="ProteomicsDB" id="271627">
    <molecule id="Q9Z186-2"/>
</dbReference>
<dbReference type="Antibodypedia" id="53147">
    <property type="antibodies" value="82 antibodies from 13 providers"/>
</dbReference>
<dbReference type="DNASU" id="14378"/>
<dbReference type="Ensembl" id="ENSMUST00000005364.12">
    <molecule id="Q9Z186-1"/>
    <property type="protein sequence ID" value="ENSMUSP00000005364.6"/>
    <property type="gene ID" value="ENSMUSG00000005232.12"/>
</dbReference>
<dbReference type="Ensembl" id="ENSMUST00000112317.3">
    <molecule id="Q9Z186-2"/>
    <property type="protein sequence ID" value="ENSMUSP00000107936.3"/>
    <property type="gene ID" value="ENSMUSG00000005232.12"/>
</dbReference>
<dbReference type="GeneID" id="14378"/>
<dbReference type="KEGG" id="mmu:14378"/>
<dbReference type="UCSC" id="uc008jxy.2">
    <molecule id="Q9Z186-1"/>
    <property type="organism name" value="mouse"/>
</dbReference>
<dbReference type="UCSC" id="uc008jxz.2">
    <molecule id="Q9Z186-2"/>
    <property type="organism name" value="mouse"/>
</dbReference>
<dbReference type="AGR" id="MGI:1277193"/>
<dbReference type="CTD" id="57818"/>
<dbReference type="MGI" id="MGI:1277193">
    <property type="gene designation" value="G6pc2"/>
</dbReference>
<dbReference type="VEuPathDB" id="HostDB:ENSMUSG00000005232"/>
<dbReference type="eggNOG" id="ENOG502QS9B">
    <property type="taxonomic scope" value="Eukaryota"/>
</dbReference>
<dbReference type="GeneTree" id="ENSGT00950000183150"/>
<dbReference type="HOGENOM" id="CLU_052517_0_0_1"/>
<dbReference type="InParanoid" id="Q9Z186"/>
<dbReference type="OMA" id="EEHLFYV"/>
<dbReference type="OrthoDB" id="6416209at2759"/>
<dbReference type="PhylomeDB" id="Q9Z186"/>
<dbReference type="TreeFam" id="TF324388"/>
<dbReference type="BRENDA" id="3.1.3.9">
    <property type="organism ID" value="3474"/>
</dbReference>
<dbReference type="Reactome" id="R-MMU-70263">
    <property type="pathway name" value="Gluconeogenesis"/>
</dbReference>
<dbReference type="UniPathway" id="UPA00138"/>
<dbReference type="BioGRID-ORCS" id="14378">
    <property type="hits" value="2 hits in 78 CRISPR screens"/>
</dbReference>
<dbReference type="PRO" id="PR:Q9Z186"/>
<dbReference type="Proteomes" id="UP000000589">
    <property type="component" value="Chromosome 2"/>
</dbReference>
<dbReference type="RNAct" id="Q9Z186">
    <property type="molecule type" value="protein"/>
</dbReference>
<dbReference type="Bgee" id="ENSMUSG00000005232">
    <property type="expression patterns" value="Expressed in islet of Langerhans and 69 other cell types or tissues"/>
</dbReference>
<dbReference type="GO" id="GO:0005783">
    <property type="term" value="C:endoplasmic reticulum"/>
    <property type="evidence" value="ECO:0000314"/>
    <property type="project" value="MGI"/>
</dbReference>
<dbReference type="GO" id="GO:0005789">
    <property type="term" value="C:endoplasmic reticulum membrane"/>
    <property type="evidence" value="ECO:0000250"/>
    <property type="project" value="MGI"/>
</dbReference>
<dbReference type="GO" id="GO:0004346">
    <property type="term" value="F:glucose-6-phosphatase activity"/>
    <property type="evidence" value="ECO:0000314"/>
    <property type="project" value="MGI"/>
</dbReference>
<dbReference type="GO" id="GO:0006094">
    <property type="term" value="P:gluconeogenesis"/>
    <property type="evidence" value="ECO:0007669"/>
    <property type="project" value="UniProtKB-UniPathway"/>
</dbReference>
<dbReference type="GO" id="GO:0042593">
    <property type="term" value="P:glucose homeostasis"/>
    <property type="evidence" value="ECO:0007669"/>
    <property type="project" value="Ensembl"/>
</dbReference>
<dbReference type="GO" id="GO:0050796">
    <property type="term" value="P:regulation of insulin secretion"/>
    <property type="evidence" value="ECO:0007669"/>
    <property type="project" value="Ensembl"/>
</dbReference>
<dbReference type="CDD" id="cd03381">
    <property type="entry name" value="PAP2_glucose_6_phosphatase"/>
    <property type="match status" value="1"/>
</dbReference>
<dbReference type="FunFam" id="1.20.144.10:FF:000021">
    <property type="entry name" value="Glucose-6-phosphatase 2"/>
    <property type="match status" value="1"/>
</dbReference>
<dbReference type="Gene3D" id="1.20.144.10">
    <property type="entry name" value="Phosphatidic acid phosphatase type 2/haloperoxidase"/>
    <property type="match status" value="1"/>
</dbReference>
<dbReference type="InterPro" id="IPR016275">
    <property type="entry name" value="Glucose-6-phosphatase"/>
</dbReference>
<dbReference type="InterPro" id="IPR036938">
    <property type="entry name" value="P_Acid_Pase_2/haloperoxi_sf"/>
</dbReference>
<dbReference type="InterPro" id="IPR000326">
    <property type="entry name" value="P_Acid_Pase_2/haloperoxidase"/>
</dbReference>
<dbReference type="PANTHER" id="PTHR12591">
    <property type="entry name" value="GLUCOSE-6-PHOSPHATASE"/>
    <property type="match status" value="1"/>
</dbReference>
<dbReference type="PANTHER" id="PTHR12591:SF1">
    <property type="entry name" value="GLUCOSE-6-PHOSPHATASE 2"/>
    <property type="match status" value="1"/>
</dbReference>
<dbReference type="Pfam" id="PF01569">
    <property type="entry name" value="PAP2"/>
    <property type="match status" value="1"/>
</dbReference>
<dbReference type="PIRSF" id="PIRSF000905">
    <property type="entry name" value="Glucose-6-phosphatase"/>
    <property type="match status" value="1"/>
</dbReference>
<dbReference type="SMART" id="SM00014">
    <property type="entry name" value="acidPPc"/>
    <property type="match status" value="1"/>
</dbReference>
<dbReference type="SUPFAM" id="SSF48317">
    <property type="entry name" value="Acid phosphatase/Vanadium-dependent haloperoxidase"/>
    <property type="match status" value="1"/>
</dbReference>
<keyword id="KW-0025">Alternative splicing</keyword>
<keyword id="KW-0256">Endoplasmic reticulum</keyword>
<keyword id="KW-0312">Gluconeogenesis</keyword>
<keyword id="KW-0325">Glycoprotein</keyword>
<keyword id="KW-0378">Hydrolase</keyword>
<keyword id="KW-0472">Membrane</keyword>
<keyword id="KW-1185">Reference proteome</keyword>
<keyword id="KW-0812">Transmembrane</keyword>
<keyword id="KW-1133">Transmembrane helix</keyword>
<name>G6PC2_MOUSE</name>
<accession>Q9Z186</accession>
<accession>A2AUN2</accession>
<accession>Q2M2M7</accession>
<organism>
    <name type="scientific">Mus musculus</name>
    <name type="common">Mouse</name>
    <dbReference type="NCBI Taxonomy" id="10090"/>
    <lineage>
        <taxon>Eukaryota</taxon>
        <taxon>Metazoa</taxon>
        <taxon>Chordata</taxon>
        <taxon>Craniata</taxon>
        <taxon>Vertebrata</taxon>
        <taxon>Euteleostomi</taxon>
        <taxon>Mammalia</taxon>
        <taxon>Eutheria</taxon>
        <taxon>Euarchontoglires</taxon>
        <taxon>Glires</taxon>
        <taxon>Rodentia</taxon>
        <taxon>Myomorpha</taxon>
        <taxon>Muroidea</taxon>
        <taxon>Muridae</taxon>
        <taxon>Murinae</taxon>
        <taxon>Mus</taxon>
        <taxon>Mus</taxon>
    </lineage>
</organism>
<gene>
    <name type="primary">G6pc2</name>
    <name type="synonym">Igrp</name>
</gene>
<reference key="1">
    <citation type="journal article" date="1999" name="Diabetes">
        <title>Molecular cloning of a pancreatic islet-specific glucose-6-phosphatase catalytic subunit-related protein.</title>
        <authorList>
            <person name="Arden S.D."/>
            <person name="Zahn T."/>
            <person name="Steegers S."/>
            <person name="Webb S."/>
            <person name="Bergman B."/>
            <person name="O'Brien R.M."/>
            <person name="Hutton J.C."/>
        </authorList>
    </citation>
    <scope>NUCLEOTIDE SEQUENCE [MRNA] (ISOFORM 1)</scope>
    <scope>CHARACTERIZATION</scope>
    <scope>GLYCOSYLATION</scope>
    <scope>TISSUE SPECIFICITY</scope>
    <scope>DEVELOPMENTAL STAGE</scope>
    <source>
        <tissue>Pancreatic islet</tissue>
    </source>
</reference>
<reference key="2">
    <citation type="journal article" date="1999" name="Diabetes">
        <title>Structure and promoter activity of an islet-specific glucose-6-phosphatase catalytic subunit-related gene.</title>
        <authorList>
            <person name="Ebert D.H."/>
            <person name="Bischof L.J."/>
            <person name="Streeper R.S."/>
            <person name="Chapman S.C."/>
            <person name="Svitek C.A."/>
            <person name="Goldman J.K."/>
            <person name="Mathews C.E."/>
            <person name="Leiter E.H."/>
            <person name="Hutton J.C."/>
            <person name="O'Brien R.M."/>
        </authorList>
    </citation>
    <scope>NUCLEOTIDE SEQUENCE [GENOMIC DNA]</scope>
</reference>
<reference key="3">
    <citation type="journal article" date="2005" name="Science">
        <title>The transcriptional landscape of the mammalian genome.</title>
        <authorList>
            <person name="Carninci P."/>
            <person name="Kasukawa T."/>
            <person name="Katayama S."/>
            <person name="Gough J."/>
            <person name="Frith M.C."/>
            <person name="Maeda N."/>
            <person name="Oyama R."/>
            <person name="Ravasi T."/>
            <person name="Lenhard B."/>
            <person name="Wells C."/>
            <person name="Kodzius R."/>
            <person name="Shimokawa K."/>
            <person name="Bajic V.B."/>
            <person name="Brenner S.E."/>
            <person name="Batalov S."/>
            <person name="Forrest A.R."/>
            <person name="Zavolan M."/>
            <person name="Davis M.J."/>
            <person name="Wilming L.G."/>
            <person name="Aidinis V."/>
            <person name="Allen J.E."/>
            <person name="Ambesi-Impiombato A."/>
            <person name="Apweiler R."/>
            <person name="Aturaliya R.N."/>
            <person name="Bailey T.L."/>
            <person name="Bansal M."/>
            <person name="Baxter L."/>
            <person name="Beisel K.W."/>
            <person name="Bersano T."/>
            <person name="Bono H."/>
            <person name="Chalk A.M."/>
            <person name="Chiu K.P."/>
            <person name="Choudhary V."/>
            <person name="Christoffels A."/>
            <person name="Clutterbuck D.R."/>
            <person name="Crowe M.L."/>
            <person name="Dalla E."/>
            <person name="Dalrymple B.P."/>
            <person name="de Bono B."/>
            <person name="Della Gatta G."/>
            <person name="di Bernardo D."/>
            <person name="Down T."/>
            <person name="Engstrom P."/>
            <person name="Fagiolini M."/>
            <person name="Faulkner G."/>
            <person name="Fletcher C.F."/>
            <person name="Fukushima T."/>
            <person name="Furuno M."/>
            <person name="Futaki S."/>
            <person name="Gariboldi M."/>
            <person name="Georgii-Hemming P."/>
            <person name="Gingeras T.R."/>
            <person name="Gojobori T."/>
            <person name="Green R.E."/>
            <person name="Gustincich S."/>
            <person name="Harbers M."/>
            <person name="Hayashi Y."/>
            <person name="Hensch T.K."/>
            <person name="Hirokawa N."/>
            <person name="Hill D."/>
            <person name="Huminiecki L."/>
            <person name="Iacono M."/>
            <person name="Ikeo K."/>
            <person name="Iwama A."/>
            <person name="Ishikawa T."/>
            <person name="Jakt M."/>
            <person name="Kanapin A."/>
            <person name="Katoh M."/>
            <person name="Kawasawa Y."/>
            <person name="Kelso J."/>
            <person name="Kitamura H."/>
            <person name="Kitano H."/>
            <person name="Kollias G."/>
            <person name="Krishnan S.P."/>
            <person name="Kruger A."/>
            <person name="Kummerfeld S.K."/>
            <person name="Kurochkin I.V."/>
            <person name="Lareau L.F."/>
            <person name="Lazarevic D."/>
            <person name="Lipovich L."/>
            <person name="Liu J."/>
            <person name="Liuni S."/>
            <person name="McWilliam S."/>
            <person name="Madan Babu M."/>
            <person name="Madera M."/>
            <person name="Marchionni L."/>
            <person name="Matsuda H."/>
            <person name="Matsuzawa S."/>
            <person name="Miki H."/>
            <person name="Mignone F."/>
            <person name="Miyake S."/>
            <person name="Morris K."/>
            <person name="Mottagui-Tabar S."/>
            <person name="Mulder N."/>
            <person name="Nakano N."/>
            <person name="Nakauchi H."/>
            <person name="Ng P."/>
            <person name="Nilsson R."/>
            <person name="Nishiguchi S."/>
            <person name="Nishikawa S."/>
            <person name="Nori F."/>
            <person name="Ohara O."/>
            <person name="Okazaki Y."/>
            <person name="Orlando V."/>
            <person name="Pang K.C."/>
            <person name="Pavan W.J."/>
            <person name="Pavesi G."/>
            <person name="Pesole G."/>
            <person name="Petrovsky N."/>
            <person name="Piazza S."/>
            <person name="Reed J."/>
            <person name="Reid J.F."/>
            <person name="Ring B.Z."/>
            <person name="Ringwald M."/>
            <person name="Rost B."/>
            <person name="Ruan Y."/>
            <person name="Salzberg S.L."/>
            <person name="Sandelin A."/>
            <person name="Schneider C."/>
            <person name="Schoenbach C."/>
            <person name="Sekiguchi K."/>
            <person name="Semple C.A."/>
            <person name="Seno S."/>
            <person name="Sessa L."/>
            <person name="Sheng Y."/>
            <person name="Shibata Y."/>
            <person name="Shimada H."/>
            <person name="Shimada K."/>
            <person name="Silva D."/>
            <person name="Sinclair B."/>
            <person name="Sperling S."/>
            <person name="Stupka E."/>
            <person name="Sugiura K."/>
            <person name="Sultana R."/>
            <person name="Takenaka Y."/>
            <person name="Taki K."/>
            <person name="Tammoja K."/>
            <person name="Tan S.L."/>
            <person name="Tang S."/>
            <person name="Taylor M.S."/>
            <person name="Tegner J."/>
            <person name="Teichmann S.A."/>
            <person name="Ueda H.R."/>
            <person name="van Nimwegen E."/>
            <person name="Verardo R."/>
            <person name="Wei C.L."/>
            <person name="Yagi K."/>
            <person name="Yamanishi H."/>
            <person name="Zabarovsky E."/>
            <person name="Zhu S."/>
            <person name="Zimmer A."/>
            <person name="Hide W."/>
            <person name="Bult C."/>
            <person name="Grimmond S.M."/>
            <person name="Teasdale R.D."/>
            <person name="Liu E.T."/>
            <person name="Brusic V."/>
            <person name="Quackenbush J."/>
            <person name="Wahlestedt C."/>
            <person name="Mattick J.S."/>
            <person name="Hume D.A."/>
            <person name="Kai C."/>
            <person name="Sasaki D."/>
            <person name="Tomaru Y."/>
            <person name="Fukuda S."/>
            <person name="Kanamori-Katayama M."/>
            <person name="Suzuki M."/>
            <person name="Aoki J."/>
            <person name="Arakawa T."/>
            <person name="Iida J."/>
            <person name="Imamura K."/>
            <person name="Itoh M."/>
            <person name="Kato T."/>
            <person name="Kawaji H."/>
            <person name="Kawagashira N."/>
            <person name="Kawashima T."/>
            <person name="Kojima M."/>
            <person name="Kondo S."/>
            <person name="Konno H."/>
            <person name="Nakano K."/>
            <person name="Ninomiya N."/>
            <person name="Nishio T."/>
            <person name="Okada M."/>
            <person name="Plessy C."/>
            <person name="Shibata K."/>
            <person name="Shiraki T."/>
            <person name="Suzuki S."/>
            <person name="Tagami M."/>
            <person name="Waki K."/>
            <person name="Watahiki A."/>
            <person name="Okamura-Oho Y."/>
            <person name="Suzuki H."/>
            <person name="Kawai J."/>
            <person name="Hayashizaki Y."/>
        </authorList>
    </citation>
    <scope>NUCLEOTIDE SEQUENCE [LARGE SCALE MRNA] (ISOFORM 1)</scope>
    <source>
        <strain>C57BL/6J</strain>
        <tissue>Pancreas</tissue>
    </source>
</reference>
<reference key="4">
    <citation type="journal article" date="2009" name="PLoS Biol.">
        <title>Lineage-specific biology revealed by a finished genome assembly of the mouse.</title>
        <authorList>
            <person name="Church D.M."/>
            <person name="Goodstadt L."/>
            <person name="Hillier L.W."/>
            <person name="Zody M.C."/>
            <person name="Goldstein S."/>
            <person name="She X."/>
            <person name="Bult C.J."/>
            <person name="Agarwala R."/>
            <person name="Cherry J.L."/>
            <person name="DiCuccio M."/>
            <person name="Hlavina W."/>
            <person name="Kapustin Y."/>
            <person name="Meric P."/>
            <person name="Maglott D."/>
            <person name="Birtle Z."/>
            <person name="Marques A.C."/>
            <person name="Graves T."/>
            <person name="Zhou S."/>
            <person name="Teague B."/>
            <person name="Potamousis K."/>
            <person name="Churas C."/>
            <person name="Place M."/>
            <person name="Herschleb J."/>
            <person name="Runnheim R."/>
            <person name="Forrest D."/>
            <person name="Amos-Landgraf J."/>
            <person name="Schwartz D.C."/>
            <person name="Cheng Z."/>
            <person name="Lindblad-Toh K."/>
            <person name="Eichler E.E."/>
            <person name="Ponting C.P."/>
        </authorList>
    </citation>
    <scope>NUCLEOTIDE SEQUENCE [LARGE SCALE GENOMIC DNA]</scope>
    <source>
        <strain>C57BL/6J</strain>
    </source>
</reference>
<reference key="5">
    <citation type="journal article" date="2004" name="Genome Res.">
        <title>The status, quality, and expansion of the NIH full-length cDNA project: the Mammalian Gene Collection (MGC).</title>
        <authorList>
            <consortium name="The MGC Project Team"/>
        </authorList>
    </citation>
    <scope>NUCLEOTIDE SEQUENCE [LARGE SCALE MRNA] (ISOFORM 2)</scope>
</reference>
<reference key="6">
    <citation type="journal article" date="2003" name="Biochem. Biophys. Res. Commun.">
        <title>Evidence for the expression of both the hydrolase and translocase components of hepatic glucose-6-phosphatase in murine pancreatic islets.</title>
        <authorList>
            <person name="Goh B.-H."/>
            <person name="Efendic S."/>
            <person name="Khan A."/>
            <person name="Portwood N."/>
        </authorList>
    </citation>
    <scope>TISSUE SPECIFICITY</scope>
</reference>
<reference key="7">
    <citation type="journal article" date="2003" name="Proc. Natl. Acad. Sci. U.S.A.">
        <title>Identification of the beta cell antigen targeted by a prevalent population of pathogenic CD8+ T cells in autoimmune diabetes.</title>
        <authorList>
            <person name="Lieberman S.M."/>
            <person name="Evans A.M."/>
            <person name="Han B."/>
            <person name="Takaki T."/>
            <person name="Vinnitskaya Y."/>
            <person name="Caldwell J.A."/>
            <person name="Serreze D.V."/>
            <person name="Shabanowitz J."/>
            <person name="Hunt D.F."/>
            <person name="Nathenson S.G."/>
            <person name="Santamaria P."/>
            <person name="DiLorenzo T.P."/>
        </authorList>
    </citation>
    <scope>IDENTIFICATION BY MASS SPECTROMETRY</scope>
    <scope>IDENTIFICATION AS AN AUTOANTIGEN</scope>
</reference>
<reference key="8">
    <citation type="journal article" date="2004" name="J. Biol. Chem.">
        <title>Enzymatic characterization of the pancreatic islet-specific glucose-6-phosphatase-related protein (IGRP).</title>
        <authorList>
            <person name="Petrolonis A.J."/>
            <person name="Yang Q."/>
            <person name="Tummino P.J."/>
            <person name="Fish S.M."/>
            <person name="Prack A.E."/>
            <person name="Jain S."/>
            <person name="Parsons T.F."/>
            <person name="Li P."/>
            <person name="Dales N.A."/>
            <person name="Ge L."/>
            <person name="Langston S.P."/>
            <person name="Schuller A.G.P."/>
            <person name="An W.F."/>
            <person name="Tartaglia L.A."/>
            <person name="Chen H."/>
            <person name="Hong S.-B."/>
        </authorList>
    </citation>
    <scope>CATALYTIC ACTIVITY</scope>
    <scope>INDUCTION</scope>
    <scope>TISSUE SPECIFICITY</scope>
</reference>
<reference key="9">
    <citation type="journal article" date="2005" name="J. Immunol.">
        <title>Identification of CD4+ T cell-specific epitopes of islet-specific glucose-6-phosphatase catalytic subunit-related protein: a novel beta cell autoantigen in type 1 diabetes.</title>
        <authorList>
            <person name="Mukherjee R."/>
            <person name="Wagar D."/>
            <person name="Stephens T.A."/>
            <person name="Lee-Chan E."/>
            <person name="Singh B."/>
        </authorList>
    </citation>
    <scope>IDENTIFICATION AS AN AUTOANTIGEN</scope>
</reference>
<reference key="10">
    <citation type="journal article" date="2007" name="Diabetologia">
        <title>Deletion of the gene encoding the islet-specific glucose-6-phosphatase catalytic subunit-related protein autoantigen results in a mild metabolic phenotype.</title>
        <authorList>
            <person name="Wang Y."/>
            <person name="Martin C.C."/>
            <person name="Oeser J.K."/>
            <person name="Sarkar S."/>
            <person name="McGuinness O.P."/>
            <person name="Hutton J.C."/>
            <person name="O'Brien R.M."/>
        </authorList>
    </citation>
    <scope>DISRUPTION PHENOTYPE</scope>
</reference>
<feature type="chain" id="PRO_0000334510" description="Glucose-6-phosphatase 2">
    <location>
        <begin position="1"/>
        <end position="355"/>
    </location>
</feature>
<feature type="topological domain" description="Lumenal" evidence="2">
    <location>
        <begin position="1"/>
        <end position="24"/>
    </location>
</feature>
<feature type="transmembrane region" description="Helical" evidence="2">
    <location>
        <begin position="25"/>
        <end position="45"/>
    </location>
</feature>
<feature type="topological domain" description="Cytoplasmic" evidence="2">
    <location>
        <begin position="46"/>
        <end position="56"/>
    </location>
</feature>
<feature type="transmembrane region" description="Helical" evidence="2">
    <location>
        <begin position="57"/>
        <end position="77"/>
    </location>
</feature>
<feature type="topological domain" description="Lumenal" evidence="2">
    <location>
        <begin position="78"/>
        <end position="115"/>
    </location>
</feature>
<feature type="transmembrane region" description="Helical" evidence="2">
    <location>
        <begin position="116"/>
        <end position="136"/>
    </location>
</feature>
<feature type="topological domain" description="Cytoplasmic" evidence="2">
    <location>
        <begin position="137"/>
        <end position="146"/>
    </location>
</feature>
<feature type="transmembrane region" description="Helical" evidence="2">
    <location>
        <begin position="147"/>
        <end position="167"/>
    </location>
</feature>
<feature type="topological domain" description="Lumenal" evidence="2">
    <location>
        <position position="168"/>
    </location>
</feature>
<feature type="transmembrane region" description="Helical" evidence="2">
    <location>
        <begin position="169"/>
        <end position="189"/>
    </location>
</feature>
<feature type="topological domain" description="Cytoplasmic" evidence="2">
    <location>
        <begin position="190"/>
        <end position="211"/>
    </location>
</feature>
<feature type="transmembrane region" description="Helical" evidence="2">
    <location>
        <begin position="212"/>
        <end position="232"/>
    </location>
</feature>
<feature type="topological domain" description="Lumenal" evidence="2">
    <location>
        <begin position="233"/>
        <end position="252"/>
    </location>
</feature>
<feature type="transmembrane region" description="Helical" evidence="2">
    <location>
        <begin position="253"/>
        <end position="273"/>
    </location>
</feature>
<feature type="topological domain" description="Cytoplasmic" evidence="2">
    <location>
        <begin position="274"/>
        <end position="290"/>
    </location>
</feature>
<feature type="transmembrane region" description="Helical" evidence="2">
    <location>
        <begin position="291"/>
        <end position="307"/>
    </location>
</feature>
<feature type="topological domain" description="Lumenal" evidence="2">
    <location>
        <begin position="308"/>
        <end position="318"/>
    </location>
</feature>
<feature type="transmembrane region" description="Helical" evidence="2">
    <location>
        <begin position="319"/>
        <end position="339"/>
    </location>
</feature>
<feature type="topological domain" description="Cytoplasmic" evidence="2">
    <location>
        <begin position="340"/>
        <end position="355"/>
    </location>
</feature>
<feature type="short sequence motif" description="Prevents secretion from ER" evidence="2">
    <location>
        <begin position="352"/>
        <end position="355"/>
    </location>
</feature>
<feature type="active site" description="Proton donor" evidence="2">
    <location>
        <position position="115"/>
    </location>
</feature>
<feature type="active site" description="Nucleophile" evidence="1">
    <location>
        <position position="174"/>
    </location>
</feature>
<feature type="binding site" evidence="2">
    <location>
        <position position="79"/>
    </location>
    <ligand>
        <name>substrate</name>
    </ligand>
</feature>
<feature type="binding site" evidence="2">
    <location>
        <position position="168"/>
    </location>
    <ligand>
        <name>substrate</name>
    </ligand>
</feature>
<feature type="glycosylation site" description="N-linked (GlcNAc...) asparagine" evidence="1">
    <location>
        <position position="92"/>
    </location>
</feature>
<feature type="splice variant" id="VSP_033650" description="In isoform 2." evidence="7">
    <original>LTWSFLW</original>
    <variation>DASSRGL</variation>
    <location>
        <begin position="148"/>
        <end position="154"/>
    </location>
</feature>
<feature type="splice variant" id="VSP_033651" description="In isoform 2." evidence="7">
    <location>
        <begin position="155"/>
        <end position="355"/>
    </location>
</feature>
<proteinExistence type="evidence at protein level"/>
<evidence type="ECO:0000250" key="1"/>
<evidence type="ECO:0000255" key="2"/>
<evidence type="ECO:0000269" key="3">
    <source>
    </source>
</evidence>
<evidence type="ECO:0000269" key="4">
    <source>
    </source>
</evidence>
<evidence type="ECO:0000269" key="5">
    <source>
    </source>
</evidence>
<evidence type="ECO:0000269" key="6">
    <source>
    </source>
</evidence>
<evidence type="ECO:0000303" key="7">
    <source>
    </source>
</evidence>
<evidence type="ECO:0000305" key="8"/>
<sequence>MDFLHRSGVLIIHHLQEDYRTYYGFLNFMSNVGDPRNIFSIYFPLWFQLNQNVGTKMIWVAVIGDWFNLIFKWILFGHRPYWWIQETEIYPNHSSPCLEQFPTTCETGPGSPSGHAMGSSCVWYVMVTAALSYTISRMEESSVTLHRLTWSFLWSVFWLIQISVCISRVFIATHFPHQVILGVIGGMLVAEAFEHTPGVHMASLSVYLKTNVFLFLFALGFYLLLRLFGIDLLWSVPIAKKWCANPDWIHIDSTPFAGLVRNLGVLFGLGFAINSEMFLRSCQGENGTKPSFRLLCALTSLTTMQLYRFIKIPTHAEPLFYLLSFCKSASIPLMVVALIPYCVHMLMRPGDKKTK</sequence>
<comment type="function">
    <text evidence="1">May hydrolyze glucose-6-phosphate to glucose in the endoplasmic reticulum. May be responsible for glucose production through glycogenolysis and gluconeogenesis (By similarity).</text>
</comment>
<comment type="catalytic activity">
    <reaction evidence="5">
        <text>D-glucose 6-phosphate + H2O = D-glucose + phosphate</text>
        <dbReference type="Rhea" id="RHEA:16689"/>
        <dbReference type="ChEBI" id="CHEBI:4167"/>
        <dbReference type="ChEBI" id="CHEBI:15377"/>
        <dbReference type="ChEBI" id="CHEBI:43474"/>
        <dbReference type="ChEBI" id="CHEBI:61548"/>
        <dbReference type="EC" id="3.1.3.9"/>
    </reaction>
</comment>
<comment type="pathway">
    <text>Carbohydrate biosynthesis; gluconeogenesis.</text>
</comment>
<comment type="subcellular location">
    <subcellularLocation>
        <location evidence="1">Endoplasmic reticulum membrane</location>
        <topology evidence="1">Multi-pass membrane protein</topology>
    </subcellularLocation>
</comment>
<comment type="alternative products">
    <event type="alternative splicing"/>
    <isoform>
        <id>Q9Z186-1</id>
        <name>1</name>
        <sequence type="displayed"/>
    </isoform>
    <isoform>
        <id>Q9Z186-2</id>
        <name>2</name>
        <sequence type="described" ref="VSP_033650 VSP_033651"/>
    </isoform>
</comment>
<comment type="tissue specificity">
    <text evidence="3 4 5">Specifically expressed in pancreatic islet cells, in particular those of beta-cell origin. Not detected in testis, kidney, muscle, liver, lung, spleen, brain, pituitary, gastric fundus or heart.</text>
</comment>
<comment type="developmental stage">
    <text evidence="3">Initial onset of expression in the pancreas is at 12 dpc and prominent expression is detected at 14 dpc.</text>
</comment>
<comment type="induction">
    <text evidence="5">Up-regulated in islet cells cultured in hyperglycemic concentrations of glucose.</text>
</comment>
<comment type="PTM">
    <text evidence="1">N-glycosylated; the non-glycosylated form is more unstable and is degraded through the proteasome.</text>
</comment>
<comment type="disruption phenotype">
    <text evidence="6">Mice are no overt anatomical or behavioral phenotype but display a mild metabolic phenotype. Upon fasting those mice exhibit a significant decrease in blood glucose and triacylglycerol compared to wild-type mice.</text>
</comment>
<comment type="miscellaneous">
    <text>G6pc2 is an autoantigen which is the natural target of a prevalent T-cell population causing insulin-dependent diabetes mellitus through destruction of pancreatic beta cells.</text>
</comment>
<comment type="similarity">
    <text evidence="8">Belongs to the glucose-6-phosphatase family.</text>
</comment>
<comment type="sequence caution" evidence="8">
    <conflict type="erroneous translation">
        <sequence resource="EMBL-CDS" id="AAI11906"/>
    </conflict>
    <text>Wrong choice of CDS.</text>
</comment>
<protein>
    <recommendedName>
        <fullName>Glucose-6-phosphatase 2</fullName>
        <shortName>G-6-Pase 2</shortName>
        <shortName>G6Pase 2</shortName>
        <ecNumber>3.1.3.9</ecNumber>
    </recommendedName>
    <alternativeName>
        <fullName>Islet-specific glucose-6-phosphatase catalytic subunit-related protein</fullName>
    </alternativeName>
</protein>